<keyword id="KW-1185">Reference proteome</keyword>
<keyword id="KW-0687">Ribonucleoprotein</keyword>
<keyword id="KW-0689">Ribosomal protein</keyword>
<keyword id="KW-0694">RNA-binding</keyword>
<keyword id="KW-0699">rRNA-binding</keyword>
<proteinExistence type="inferred from homology"/>
<feature type="chain" id="PRO_1000165869" description="Large ribosomal subunit protein uL3">
    <location>
        <begin position="1"/>
        <end position="209"/>
    </location>
</feature>
<feature type="region of interest" description="Disordered" evidence="2">
    <location>
        <begin position="127"/>
        <end position="151"/>
    </location>
</feature>
<reference key="1">
    <citation type="submission" date="2004-12" db="EMBL/GenBank/DDBJ databases">
        <title>The genome sequence of Borrelia hermsii and Borrelia turicatae: comparative analysis of two agents of endemic N. America relapsing fever.</title>
        <authorList>
            <person name="Porcella S.F."/>
            <person name="Raffel S.J."/>
            <person name="Schrumpf M.E."/>
            <person name="Montgomery B."/>
            <person name="Smith T."/>
            <person name="Schwan T.G."/>
        </authorList>
    </citation>
    <scope>NUCLEOTIDE SEQUENCE [LARGE SCALE GENOMIC DNA]</scope>
    <source>
        <strain>91E135</strain>
    </source>
</reference>
<protein>
    <recommendedName>
        <fullName evidence="1">Large ribosomal subunit protein uL3</fullName>
    </recommendedName>
    <alternativeName>
        <fullName evidence="3">50S ribosomal protein L3</fullName>
    </alternativeName>
</protein>
<gene>
    <name evidence="1" type="primary">rplC</name>
    <name type="ordered locus">BT0478</name>
</gene>
<sequence length="209" mass="22675">MLGLIGKKVGMTQVFQGNGVVVPVTVIEFEPNYVIGKKTVERDGYDALIMGSVDLRSSKISKPIRGQYKNLENVEPKRYVIEFKGLKGYDAGDEIGLDAFREIKYVDITGTTKGKGFQGAMKRHNFSGGPSSHGSKFHRHLGGTGQATTPARTFKGTKMAGRMGGEQQTIQNLEVVFIDEEKRAILVKGAVPGVKGSFVIVKKAKKVGV</sequence>
<organism>
    <name type="scientific">Borrelia turicatae (strain 91E135)</name>
    <dbReference type="NCBI Taxonomy" id="314724"/>
    <lineage>
        <taxon>Bacteria</taxon>
        <taxon>Pseudomonadati</taxon>
        <taxon>Spirochaetota</taxon>
        <taxon>Spirochaetia</taxon>
        <taxon>Spirochaetales</taxon>
        <taxon>Borreliaceae</taxon>
        <taxon>Borrelia</taxon>
    </lineage>
</organism>
<comment type="function">
    <text evidence="1">One of the primary rRNA binding proteins, it binds directly near the 3'-end of the 23S rRNA, where it nucleates assembly of the 50S subunit.</text>
</comment>
<comment type="subunit">
    <text evidence="1">Part of the 50S ribosomal subunit. Forms a cluster with proteins L14 and L19.</text>
</comment>
<comment type="similarity">
    <text evidence="1">Belongs to the universal ribosomal protein uL3 family.</text>
</comment>
<evidence type="ECO:0000255" key="1">
    <source>
        <dbReference type="HAMAP-Rule" id="MF_01325"/>
    </source>
</evidence>
<evidence type="ECO:0000256" key="2">
    <source>
        <dbReference type="SAM" id="MobiDB-lite"/>
    </source>
</evidence>
<evidence type="ECO:0000305" key="3"/>
<accession>A1QZR4</accession>
<name>RL3_BORT9</name>
<dbReference type="EMBL" id="CP000049">
    <property type="protein sequence ID" value="AAX17806.1"/>
    <property type="molecule type" value="Genomic_DNA"/>
</dbReference>
<dbReference type="RefSeq" id="WP_011772425.1">
    <property type="nucleotide sequence ID" value="NZ_CP073176.1"/>
</dbReference>
<dbReference type="SMR" id="A1QZR4"/>
<dbReference type="KEGG" id="btu:BT0478"/>
<dbReference type="eggNOG" id="COG0087">
    <property type="taxonomic scope" value="Bacteria"/>
</dbReference>
<dbReference type="HOGENOM" id="CLU_044142_4_1_12"/>
<dbReference type="Proteomes" id="UP000001205">
    <property type="component" value="Chromosome"/>
</dbReference>
<dbReference type="GO" id="GO:0022625">
    <property type="term" value="C:cytosolic large ribosomal subunit"/>
    <property type="evidence" value="ECO:0007669"/>
    <property type="project" value="TreeGrafter"/>
</dbReference>
<dbReference type="GO" id="GO:0019843">
    <property type="term" value="F:rRNA binding"/>
    <property type="evidence" value="ECO:0007669"/>
    <property type="project" value="UniProtKB-UniRule"/>
</dbReference>
<dbReference type="GO" id="GO:0003735">
    <property type="term" value="F:structural constituent of ribosome"/>
    <property type="evidence" value="ECO:0007669"/>
    <property type="project" value="InterPro"/>
</dbReference>
<dbReference type="GO" id="GO:0006412">
    <property type="term" value="P:translation"/>
    <property type="evidence" value="ECO:0007669"/>
    <property type="project" value="UniProtKB-UniRule"/>
</dbReference>
<dbReference type="FunFam" id="2.40.30.10:FF:000004">
    <property type="entry name" value="50S ribosomal protein L3"/>
    <property type="match status" value="1"/>
</dbReference>
<dbReference type="Gene3D" id="3.30.160.810">
    <property type="match status" value="1"/>
</dbReference>
<dbReference type="Gene3D" id="2.40.30.10">
    <property type="entry name" value="Translation factors"/>
    <property type="match status" value="1"/>
</dbReference>
<dbReference type="HAMAP" id="MF_01325_B">
    <property type="entry name" value="Ribosomal_uL3_B"/>
    <property type="match status" value="1"/>
</dbReference>
<dbReference type="InterPro" id="IPR000597">
    <property type="entry name" value="Ribosomal_uL3"/>
</dbReference>
<dbReference type="InterPro" id="IPR019927">
    <property type="entry name" value="Ribosomal_uL3_bac/org-type"/>
</dbReference>
<dbReference type="InterPro" id="IPR019926">
    <property type="entry name" value="Ribosomal_uL3_CS"/>
</dbReference>
<dbReference type="InterPro" id="IPR009000">
    <property type="entry name" value="Transl_B-barrel_sf"/>
</dbReference>
<dbReference type="NCBIfam" id="TIGR03625">
    <property type="entry name" value="L3_bact"/>
    <property type="match status" value="1"/>
</dbReference>
<dbReference type="PANTHER" id="PTHR11229">
    <property type="entry name" value="50S RIBOSOMAL PROTEIN L3"/>
    <property type="match status" value="1"/>
</dbReference>
<dbReference type="PANTHER" id="PTHR11229:SF16">
    <property type="entry name" value="LARGE RIBOSOMAL SUBUNIT PROTEIN UL3C"/>
    <property type="match status" value="1"/>
</dbReference>
<dbReference type="Pfam" id="PF00297">
    <property type="entry name" value="Ribosomal_L3"/>
    <property type="match status" value="1"/>
</dbReference>
<dbReference type="SUPFAM" id="SSF50447">
    <property type="entry name" value="Translation proteins"/>
    <property type="match status" value="1"/>
</dbReference>
<dbReference type="PROSITE" id="PS00474">
    <property type="entry name" value="RIBOSOMAL_L3"/>
    <property type="match status" value="1"/>
</dbReference>